<comment type="function">
    <text evidence="1">Co-chaperone involved in the maturation of iron-sulfur cluster-containing proteins. Seems to help targeting proteins to be folded toward HscA (By similarity).</text>
</comment>
<comment type="subunit">
    <text evidence="1">Interacts with HscA and stimulates its ATPase activity.</text>
</comment>
<comment type="similarity">
    <text evidence="2">Belongs to the HscB family.</text>
</comment>
<evidence type="ECO:0000250" key="1"/>
<evidence type="ECO:0000305" key="2"/>
<proteinExistence type="inferred from homology"/>
<dbReference type="EMBL" id="CP000087">
    <property type="protein sequence ID" value="ABE04593.1"/>
    <property type="molecule type" value="Genomic_DNA"/>
</dbReference>
<dbReference type="RefSeq" id="WP_011477184.1">
    <property type="nucleotide sequence ID" value="NC_007940.1"/>
</dbReference>
<dbReference type="SMR" id="Q1RJ71"/>
<dbReference type="KEGG" id="rbe:RBE_0512"/>
<dbReference type="eggNOG" id="COG0484">
    <property type="taxonomic scope" value="Bacteria"/>
</dbReference>
<dbReference type="HOGENOM" id="CLU_068529_2_0_5"/>
<dbReference type="OrthoDB" id="287587at2"/>
<dbReference type="Proteomes" id="UP000001951">
    <property type="component" value="Chromosome"/>
</dbReference>
<dbReference type="GO" id="GO:0001671">
    <property type="term" value="F:ATPase activator activity"/>
    <property type="evidence" value="ECO:0007669"/>
    <property type="project" value="InterPro"/>
</dbReference>
<dbReference type="GO" id="GO:0051087">
    <property type="term" value="F:protein-folding chaperone binding"/>
    <property type="evidence" value="ECO:0007669"/>
    <property type="project" value="InterPro"/>
</dbReference>
<dbReference type="GO" id="GO:0044571">
    <property type="term" value="P:[2Fe-2S] cluster assembly"/>
    <property type="evidence" value="ECO:0007669"/>
    <property type="project" value="InterPro"/>
</dbReference>
<dbReference type="GO" id="GO:0051259">
    <property type="term" value="P:protein complex oligomerization"/>
    <property type="evidence" value="ECO:0007669"/>
    <property type="project" value="InterPro"/>
</dbReference>
<dbReference type="GO" id="GO:0006457">
    <property type="term" value="P:protein folding"/>
    <property type="evidence" value="ECO:0007669"/>
    <property type="project" value="UniProtKB-UniRule"/>
</dbReference>
<dbReference type="CDD" id="cd06257">
    <property type="entry name" value="DnaJ"/>
    <property type="match status" value="1"/>
</dbReference>
<dbReference type="Gene3D" id="1.10.287.110">
    <property type="entry name" value="DnaJ domain"/>
    <property type="match status" value="1"/>
</dbReference>
<dbReference type="Gene3D" id="1.20.1280.20">
    <property type="entry name" value="HscB, C-terminal domain"/>
    <property type="match status" value="1"/>
</dbReference>
<dbReference type="HAMAP" id="MF_00682">
    <property type="entry name" value="HscB"/>
    <property type="match status" value="1"/>
</dbReference>
<dbReference type="InterPro" id="IPR001623">
    <property type="entry name" value="DnaJ_domain"/>
</dbReference>
<dbReference type="InterPro" id="IPR004640">
    <property type="entry name" value="HscB"/>
</dbReference>
<dbReference type="InterPro" id="IPR036386">
    <property type="entry name" value="HscB_C_sf"/>
</dbReference>
<dbReference type="InterPro" id="IPR009073">
    <property type="entry name" value="HscB_oligo_C"/>
</dbReference>
<dbReference type="InterPro" id="IPR036869">
    <property type="entry name" value="J_dom_sf"/>
</dbReference>
<dbReference type="NCBIfam" id="TIGR00714">
    <property type="entry name" value="hscB"/>
    <property type="match status" value="1"/>
</dbReference>
<dbReference type="PANTHER" id="PTHR14021">
    <property type="entry name" value="IRON-SULFUR CLUSTER CO-CHAPERONE PROTEIN HSCB"/>
    <property type="match status" value="1"/>
</dbReference>
<dbReference type="PANTHER" id="PTHR14021:SF15">
    <property type="entry name" value="IRON-SULFUR CLUSTER CO-CHAPERONE PROTEIN HSCB"/>
    <property type="match status" value="1"/>
</dbReference>
<dbReference type="Pfam" id="PF00226">
    <property type="entry name" value="DnaJ"/>
    <property type="match status" value="1"/>
</dbReference>
<dbReference type="Pfam" id="PF07743">
    <property type="entry name" value="HSCB_C"/>
    <property type="match status" value="1"/>
</dbReference>
<dbReference type="SMART" id="SM00271">
    <property type="entry name" value="DnaJ"/>
    <property type="match status" value="1"/>
</dbReference>
<dbReference type="SUPFAM" id="SSF46565">
    <property type="entry name" value="Chaperone J-domain"/>
    <property type="match status" value="1"/>
</dbReference>
<dbReference type="SUPFAM" id="SSF47144">
    <property type="entry name" value="HSC20 (HSCB), C-terminal oligomerisation domain"/>
    <property type="match status" value="1"/>
</dbReference>
<dbReference type="PROSITE" id="PS50076">
    <property type="entry name" value="DNAJ_2"/>
    <property type="match status" value="1"/>
</dbReference>
<feature type="chain" id="PRO_0000286448" description="Co-chaperone protein HscB homolog">
    <location>
        <begin position="1"/>
        <end position="166"/>
    </location>
</feature>
<feature type="domain" description="J">
    <location>
        <begin position="3"/>
        <end position="73"/>
    </location>
</feature>
<gene>
    <name type="primary">hscB</name>
    <name type="ordered locus">RBE_0512</name>
</gene>
<organism>
    <name type="scientific">Rickettsia bellii (strain RML369-C)</name>
    <dbReference type="NCBI Taxonomy" id="336407"/>
    <lineage>
        <taxon>Bacteria</taxon>
        <taxon>Pseudomonadati</taxon>
        <taxon>Pseudomonadota</taxon>
        <taxon>Alphaproteobacteria</taxon>
        <taxon>Rickettsiales</taxon>
        <taxon>Rickettsiaceae</taxon>
        <taxon>Rickettsieae</taxon>
        <taxon>Rickettsia</taxon>
        <taxon>belli group</taxon>
    </lineage>
</organism>
<sequence length="166" mass="19670">MQNYFELLGLEQIYNIDLKILEKQYFAMQIKYHPDKAKNLQEKEQNLIIASNLNKAYYTLKDSLKRAEYMLLLYGVNLNDEKVRSKLSALELSIFWDEMELIENTSSYKSLEEIKSKYELMEKAEVNFLAESFKKQDLSDATIKTSKLKYIHTLLSKLQEKMKLCK</sequence>
<accession>Q1RJ71</accession>
<keyword id="KW-0143">Chaperone</keyword>
<protein>
    <recommendedName>
        <fullName>Co-chaperone protein HscB homolog</fullName>
    </recommendedName>
</protein>
<name>HSCB_RICBR</name>
<reference key="1">
    <citation type="journal article" date="2006" name="PLoS Genet.">
        <title>Genome sequence of Rickettsia bellii illuminates the role of amoebae in gene exchanges between intracellular pathogens.</title>
        <authorList>
            <person name="Ogata H."/>
            <person name="La Scola B."/>
            <person name="Audic S."/>
            <person name="Renesto P."/>
            <person name="Blanc G."/>
            <person name="Robert C."/>
            <person name="Fournier P.-E."/>
            <person name="Claverie J.-M."/>
            <person name="Raoult D."/>
        </authorList>
    </citation>
    <scope>NUCLEOTIDE SEQUENCE [LARGE SCALE GENOMIC DNA]</scope>
    <source>
        <strain>RML369-C</strain>
    </source>
</reference>